<protein>
    <recommendedName>
        <fullName>Uncharacterized protein PM1543</fullName>
    </recommendedName>
</protein>
<accession>Q9CKR3</accession>
<feature type="signal peptide" evidence="1">
    <location>
        <begin position="1"/>
        <end position="22"/>
    </location>
</feature>
<feature type="chain" id="PRO_0000014184" description="Uncharacterized protein PM1543">
    <location>
        <begin position="23"/>
        <end position="236"/>
    </location>
</feature>
<organism>
    <name type="scientific">Pasteurella multocida (strain Pm70)</name>
    <dbReference type="NCBI Taxonomy" id="272843"/>
    <lineage>
        <taxon>Bacteria</taxon>
        <taxon>Pseudomonadati</taxon>
        <taxon>Pseudomonadota</taxon>
        <taxon>Gammaproteobacteria</taxon>
        <taxon>Pasteurellales</taxon>
        <taxon>Pasteurellaceae</taxon>
        <taxon>Pasteurella</taxon>
    </lineage>
</organism>
<gene>
    <name type="ordered locus">PM1543</name>
</gene>
<sequence>MEFKMQKIILGMLVVTASNAMALNNNFNVYGKVGVDLVSRFDTIAITRHDTQAPKNTARFSPSLFAEITYNATPKTEVGLGLGYIHRKSSHHIIKQKTDNGNRALIDVIEEYPVNRYNSIPLYFLVKHNFYSQSDLRSYLKVDFGYAFNKTKSTLNLTESTDAAGNNQYYIEKHNISLNVENGNYYGIGFGVEYKNILAEIAYTHTDSRLTYSSKLIRGESEYKNDALRFSVGYRF</sequence>
<proteinExistence type="inferred from homology"/>
<dbReference type="EMBL" id="AE004439">
    <property type="protein sequence ID" value="AAK03627.1"/>
    <property type="molecule type" value="Genomic_DNA"/>
</dbReference>
<dbReference type="STRING" id="272843.PM1543"/>
<dbReference type="EnsemblBacteria" id="AAK03627">
    <property type="protein sequence ID" value="AAK03627"/>
    <property type="gene ID" value="PM1543"/>
</dbReference>
<dbReference type="KEGG" id="pmu:PM1543"/>
<dbReference type="HOGENOM" id="CLU_092722_0_0_6"/>
<dbReference type="Proteomes" id="UP000000809">
    <property type="component" value="Chromosome"/>
</dbReference>
<dbReference type="InterPro" id="IPR011250">
    <property type="entry name" value="OMP/PagP_b-brl"/>
</dbReference>
<dbReference type="SUPFAM" id="SSF56925">
    <property type="entry name" value="OMPA-like"/>
    <property type="match status" value="1"/>
</dbReference>
<evidence type="ECO:0000255" key="1"/>
<name>Y1543_PASMU</name>
<reference key="1">
    <citation type="journal article" date="2001" name="Proc. Natl. Acad. Sci. U.S.A.">
        <title>Complete genomic sequence of Pasteurella multocida Pm70.</title>
        <authorList>
            <person name="May B.J."/>
            <person name="Zhang Q."/>
            <person name="Li L.L."/>
            <person name="Paustian M.L."/>
            <person name="Whittam T.S."/>
            <person name="Kapur V."/>
        </authorList>
    </citation>
    <scope>NUCLEOTIDE SEQUENCE [LARGE SCALE GENOMIC DNA]</scope>
    <source>
        <strain>Pm70</strain>
    </source>
</reference>
<keyword id="KW-1185">Reference proteome</keyword>
<keyword id="KW-0732">Signal</keyword>